<comment type="function">
    <text evidence="1">Participates actively in the response to hyperosmotic and heat shock by preventing the aggregation of stress-denatured proteins, in association with DnaK and GrpE. It is the nucleotide exchange factor for DnaK and may function as a thermosensor. Unfolded proteins bind initially to DnaJ; upon interaction with the DnaJ-bound protein, DnaK hydrolyzes its bound ATP, resulting in the formation of a stable complex. GrpE releases ADP from DnaK; ATP binding to DnaK triggers the release of the substrate protein, thus completing the reaction cycle. Several rounds of ATP-dependent interactions between DnaJ, DnaK and GrpE are required for fully efficient folding.</text>
</comment>
<comment type="subunit">
    <text evidence="1">Homodimer.</text>
</comment>
<comment type="subcellular location">
    <subcellularLocation>
        <location evidence="1">Cytoplasm</location>
    </subcellularLocation>
</comment>
<comment type="similarity">
    <text evidence="1">Belongs to the GrpE family.</text>
</comment>
<proteinExistence type="inferred from homology"/>
<reference key="1">
    <citation type="journal article" date="2009" name="PLoS ONE">
        <title>Genome degradation in Brucella ovis corresponds with narrowing of its host range and tissue tropism.</title>
        <authorList>
            <person name="Tsolis R.M."/>
            <person name="Seshadri R."/>
            <person name="Santos R.L."/>
            <person name="Sangari F.J."/>
            <person name="Lobo J.M."/>
            <person name="de Jong M.F."/>
            <person name="Ren Q."/>
            <person name="Myers G."/>
            <person name="Brinkac L.M."/>
            <person name="Nelson W.C."/>
            <person name="Deboy R.T."/>
            <person name="Angiuoli S."/>
            <person name="Khouri H."/>
            <person name="Dimitrov G."/>
            <person name="Robinson J.R."/>
            <person name="Mulligan S."/>
            <person name="Walker R.L."/>
            <person name="Elzer P.E."/>
            <person name="Hassan K.A."/>
            <person name="Paulsen I.T."/>
        </authorList>
    </citation>
    <scope>NUCLEOTIDE SEQUENCE [LARGE SCALE GENOMIC DNA]</scope>
    <source>
        <strain>ATCC 25840 / 63/290 / NCTC 10512</strain>
    </source>
</reference>
<protein>
    <recommendedName>
        <fullName evidence="1">Protein GrpE</fullName>
    </recommendedName>
    <alternativeName>
        <fullName evidence="1">HSP-70 cofactor</fullName>
    </alternativeName>
</protein>
<keyword id="KW-0143">Chaperone</keyword>
<keyword id="KW-0963">Cytoplasm</keyword>
<keyword id="KW-0346">Stress response</keyword>
<sequence length="230" mass="25340">MADEKNKPENPDLDQRDINNPRDREALKQAADDFLKARRAEARAEAAADEAEGEVDETANRIAVLEADNTELKDQMLRVAAEMENLRKRTQRDVQDARAYAITNFARDMLSVSDNLRRALDTIPADALEADSNLKSLSEGVEMTERAMLLALERHGVKKLEPEGQKFDPNFHQAMFEVPNPDLPNNTVVQVVQAGYAIGDRVLRPAMVGVSKGGPKVSAENGASTSEDNA</sequence>
<evidence type="ECO:0000255" key="1">
    <source>
        <dbReference type="HAMAP-Rule" id="MF_01151"/>
    </source>
</evidence>
<evidence type="ECO:0000256" key="2">
    <source>
        <dbReference type="SAM" id="MobiDB-lite"/>
    </source>
</evidence>
<accession>A5VNA6</accession>
<organism>
    <name type="scientific">Brucella ovis (strain ATCC 25840 / 63/290 / NCTC 10512)</name>
    <dbReference type="NCBI Taxonomy" id="444178"/>
    <lineage>
        <taxon>Bacteria</taxon>
        <taxon>Pseudomonadati</taxon>
        <taxon>Pseudomonadota</taxon>
        <taxon>Alphaproteobacteria</taxon>
        <taxon>Hyphomicrobiales</taxon>
        <taxon>Brucellaceae</taxon>
        <taxon>Brucella/Ochrobactrum group</taxon>
        <taxon>Brucella</taxon>
    </lineage>
</organism>
<gene>
    <name evidence="1" type="primary">grpE</name>
    <name type="ordered locus">BOV_0165</name>
</gene>
<name>GRPE_BRUO2</name>
<feature type="chain" id="PRO_1000053549" description="Protein GrpE">
    <location>
        <begin position="1"/>
        <end position="230"/>
    </location>
</feature>
<feature type="region of interest" description="Disordered" evidence="2">
    <location>
        <begin position="1"/>
        <end position="28"/>
    </location>
</feature>
<feature type="region of interest" description="Disordered" evidence="2">
    <location>
        <begin position="209"/>
        <end position="230"/>
    </location>
</feature>
<feature type="compositionally biased region" description="Polar residues" evidence="2">
    <location>
        <begin position="221"/>
        <end position="230"/>
    </location>
</feature>
<dbReference type="EMBL" id="CP000708">
    <property type="protein sequence ID" value="ABQ61914.1"/>
    <property type="molecule type" value="Genomic_DNA"/>
</dbReference>
<dbReference type="RefSeq" id="WP_005977817.1">
    <property type="nucleotide sequence ID" value="NC_009505.1"/>
</dbReference>
<dbReference type="SMR" id="A5VNA6"/>
<dbReference type="GeneID" id="45123658"/>
<dbReference type="KEGG" id="bov:BOV_0165"/>
<dbReference type="HOGENOM" id="CLU_057217_6_2_5"/>
<dbReference type="PhylomeDB" id="A5VNA6"/>
<dbReference type="Proteomes" id="UP000006383">
    <property type="component" value="Chromosome I"/>
</dbReference>
<dbReference type="GO" id="GO:0005737">
    <property type="term" value="C:cytoplasm"/>
    <property type="evidence" value="ECO:0007669"/>
    <property type="project" value="UniProtKB-SubCell"/>
</dbReference>
<dbReference type="GO" id="GO:0000774">
    <property type="term" value="F:adenyl-nucleotide exchange factor activity"/>
    <property type="evidence" value="ECO:0007669"/>
    <property type="project" value="InterPro"/>
</dbReference>
<dbReference type="GO" id="GO:0042803">
    <property type="term" value="F:protein homodimerization activity"/>
    <property type="evidence" value="ECO:0007669"/>
    <property type="project" value="InterPro"/>
</dbReference>
<dbReference type="GO" id="GO:0051087">
    <property type="term" value="F:protein-folding chaperone binding"/>
    <property type="evidence" value="ECO:0007669"/>
    <property type="project" value="InterPro"/>
</dbReference>
<dbReference type="GO" id="GO:0051082">
    <property type="term" value="F:unfolded protein binding"/>
    <property type="evidence" value="ECO:0007669"/>
    <property type="project" value="TreeGrafter"/>
</dbReference>
<dbReference type="GO" id="GO:0006457">
    <property type="term" value="P:protein folding"/>
    <property type="evidence" value="ECO:0007669"/>
    <property type="project" value="InterPro"/>
</dbReference>
<dbReference type="CDD" id="cd00446">
    <property type="entry name" value="GrpE"/>
    <property type="match status" value="1"/>
</dbReference>
<dbReference type="FunFam" id="2.30.22.10:FF:000001">
    <property type="entry name" value="Protein GrpE"/>
    <property type="match status" value="1"/>
</dbReference>
<dbReference type="Gene3D" id="3.90.20.20">
    <property type="match status" value="1"/>
</dbReference>
<dbReference type="Gene3D" id="2.30.22.10">
    <property type="entry name" value="Head domain of nucleotide exchange factor GrpE"/>
    <property type="match status" value="1"/>
</dbReference>
<dbReference type="HAMAP" id="MF_01151">
    <property type="entry name" value="GrpE"/>
    <property type="match status" value="1"/>
</dbReference>
<dbReference type="InterPro" id="IPR000740">
    <property type="entry name" value="GrpE"/>
</dbReference>
<dbReference type="InterPro" id="IPR013805">
    <property type="entry name" value="GrpE_coiled_coil"/>
</dbReference>
<dbReference type="InterPro" id="IPR009012">
    <property type="entry name" value="GrpE_head"/>
</dbReference>
<dbReference type="NCBIfam" id="NF010737">
    <property type="entry name" value="PRK14139.1"/>
    <property type="match status" value="1"/>
</dbReference>
<dbReference type="NCBIfam" id="NF010738">
    <property type="entry name" value="PRK14140.1"/>
    <property type="match status" value="1"/>
</dbReference>
<dbReference type="NCBIfam" id="NF010739">
    <property type="entry name" value="PRK14141.1"/>
    <property type="match status" value="1"/>
</dbReference>
<dbReference type="NCBIfam" id="NF010748">
    <property type="entry name" value="PRK14150.1"/>
    <property type="match status" value="1"/>
</dbReference>
<dbReference type="PANTHER" id="PTHR21237">
    <property type="entry name" value="GRPE PROTEIN"/>
    <property type="match status" value="1"/>
</dbReference>
<dbReference type="PANTHER" id="PTHR21237:SF23">
    <property type="entry name" value="GRPE PROTEIN HOMOLOG, MITOCHONDRIAL"/>
    <property type="match status" value="1"/>
</dbReference>
<dbReference type="Pfam" id="PF01025">
    <property type="entry name" value="GrpE"/>
    <property type="match status" value="1"/>
</dbReference>
<dbReference type="PRINTS" id="PR00773">
    <property type="entry name" value="GRPEPROTEIN"/>
</dbReference>
<dbReference type="SUPFAM" id="SSF58014">
    <property type="entry name" value="Coiled-coil domain of nucleotide exchange factor GrpE"/>
    <property type="match status" value="1"/>
</dbReference>
<dbReference type="SUPFAM" id="SSF51064">
    <property type="entry name" value="Head domain of nucleotide exchange factor GrpE"/>
    <property type="match status" value="1"/>
</dbReference>
<dbReference type="PROSITE" id="PS01071">
    <property type="entry name" value="GRPE"/>
    <property type="match status" value="1"/>
</dbReference>